<organism>
    <name type="scientific">Homo sapiens</name>
    <name type="common">Human</name>
    <dbReference type="NCBI Taxonomy" id="9606"/>
    <lineage>
        <taxon>Eukaryota</taxon>
        <taxon>Metazoa</taxon>
        <taxon>Chordata</taxon>
        <taxon>Craniata</taxon>
        <taxon>Vertebrata</taxon>
        <taxon>Euteleostomi</taxon>
        <taxon>Mammalia</taxon>
        <taxon>Eutheria</taxon>
        <taxon>Euarchontoglires</taxon>
        <taxon>Primates</taxon>
        <taxon>Haplorrhini</taxon>
        <taxon>Catarrhini</taxon>
        <taxon>Hominidae</taxon>
        <taxon>Homo</taxon>
    </lineage>
</organism>
<protein>
    <recommendedName>
        <fullName>Negative elongation factor E</fullName>
        <shortName>NELF-E</shortName>
    </recommendedName>
    <alternativeName>
        <fullName evidence="15">RNA-binding protein RD</fullName>
    </alternativeName>
</protein>
<gene>
    <name type="primary">NELFE</name>
    <name evidence="15" type="synonym">RD</name>
    <name type="synonym">RDBP</name>
</gene>
<reference key="1">
    <citation type="journal article" date="1989" name="DNA">
        <title>Structure of the human RD gene: a highly conserved gene in the class III region of the major histocompatibility complex.</title>
        <authorList>
            <person name="Speiser P.W."/>
            <person name="White P.C."/>
        </authorList>
    </citation>
    <scope>NUCLEOTIDE SEQUENCE [GENOMIC DNA]</scope>
</reference>
<reference key="2">
    <citation type="journal article" date="1993" name="Biochem. J.">
        <title>cDNA cloning and characterization of the protein encoded by RD, a gene located in the class III region of the human major histocompatibility complex.</title>
        <authorList>
            <person name="Cheng J."/>
            <person name="Macon K.J."/>
            <person name="Volanakis J.E."/>
        </authorList>
    </citation>
    <scope>NUCLEOTIDE SEQUENCE [MRNA] (ISOFORM 1)</scope>
    <source>
        <tissue>T-cell</tissue>
    </source>
</reference>
<reference key="3">
    <citation type="journal article" date="2003" name="Genome Res.">
        <title>Analysis of the gene-dense major histocompatibility complex class III region and its comparison to mouse.</title>
        <authorList>
            <person name="Xie T."/>
            <person name="Rowen L."/>
            <person name="Aguado B."/>
            <person name="Ahearn M.E."/>
            <person name="Madan A."/>
            <person name="Qin S."/>
            <person name="Campbell R.D."/>
            <person name="Hood L."/>
        </authorList>
    </citation>
    <scope>NUCLEOTIDE SEQUENCE [LARGE SCALE GENOMIC DNA]</scope>
</reference>
<reference key="4">
    <citation type="journal article" date="2004" name="Nat. Genet.">
        <title>Complete sequencing and characterization of 21,243 full-length human cDNAs.</title>
        <authorList>
            <person name="Ota T."/>
            <person name="Suzuki Y."/>
            <person name="Nishikawa T."/>
            <person name="Otsuki T."/>
            <person name="Sugiyama T."/>
            <person name="Irie R."/>
            <person name="Wakamatsu A."/>
            <person name="Hayashi K."/>
            <person name="Sato H."/>
            <person name="Nagai K."/>
            <person name="Kimura K."/>
            <person name="Makita H."/>
            <person name="Sekine M."/>
            <person name="Obayashi M."/>
            <person name="Nishi T."/>
            <person name="Shibahara T."/>
            <person name="Tanaka T."/>
            <person name="Ishii S."/>
            <person name="Yamamoto J."/>
            <person name="Saito K."/>
            <person name="Kawai Y."/>
            <person name="Isono Y."/>
            <person name="Nakamura Y."/>
            <person name="Nagahari K."/>
            <person name="Murakami K."/>
            <person name="Yasuda T."/>
            <person name="Iwayanagi T."/>
            <person name="Wagatsuma M."/>
            <person name="Shiratori A."/>
            <person name="Sudo H."/>
            <person name="Hosoiri T."/>
            <person name="Kaku Y."/>
            <person name="Kodaira H."/>
            <person name="Kondo H."/>
            <person name="Sugawara M."/>
            <person name="Takahashi M."/>
            <person name="Kanda K."/>
            <person name="Yokoi T."/>
            <person name="Furuya T."/>
            <person name="Kikkawa E."/>
            <person name="Omura Y."/>
            <person name="Abe K."/>
            <person name="Kamihara K."/>
            <person name="Katsuta N."/>
            <person name="Sato K."/>
            <person name="Tanikawa M."/>
            <person name="Yamazaki M."/>
            <person name="Ninomiya K."/>
            <person name="Ishibashi T."/>
            <person name="Yamashita H."/>
            <person name="Murakawa K."/>
            <person name="Fujimori K."/>
            <person name="Tanai H."/>
            <person name="Kimata M."/>
            <person name="Watanabe M."/>
            <person name="Hiraoka S."/>
            <person name="Chiba Y."/>
            <person name="Ishida S."/>
            <person name="Ono Y."/>
            <person name="Takiguchi S."/>
            <person name="Watanabe S."/>
            <person name="Yosida M."/>
            <person name="Hotuta T."/>
            <person name="Kusano J."/>
            <person name="Kanehori K."/>
            <person name="Takahashi-Fujii A."/>
            <person name="Hara H."/>
            <person name="Tanase T.-O."/>
            <person name="Nomura Y."/>
            <person name="Togiya S."/>
            <person name="Komai F."/>
            <person name="Hara R."/>
            <person name="Takeuchi K."/>
            <person name="Arita M."/>
            <person name="Imose N."/>
            <person name="Musashino K."/>
            <person name="Yuuki H."/>
            <person name="Oshima A."/>
            <person name="Sasaki N."/>
            <person name="Aotsuka S."/>
            <person name="Yoshikawa Y."/>
            <person name="Matsunawa H."/>
            <person name="Ichihara T."/>
            <person name="Shiohata N."/>
            <person name="Sano S."/>
            <person name="Moriya S."/>
            <person name="Momiyama H."/>
            <person name="Satoh N."/>
            <person name="Takami S."/>
            <person name="Terashima Y."/>
            <person name="Suzuki O."/>
            <person name="Nakagawa S."/>
            <person name="Senoh A."/>
            <person name="Mizoguchi H."/>
            <person name="Goto Y."/>
            <person name="Shimizu F."/>
            <person name="Wakebe H."/>
            <person name="Hishigaki H."/>
            <person name="Watanabe T."/>
            <person name="Sugiyama A."/>
            <person name="Takemoto M."/>
            <person name="Kawakami B."/>
            <person name="Yamazaki M."/>
            <person name="Watanabe K."/>
            <person name="Kumagai A."/>
            <person name="Itakura S."/>
            <person name="Fukuzumi Y."/>
            <person name="Fujimori Y."/>
            <person name="Komiyama M."/>
            <person name="Tashiro H."/>
            <person name="Tanigami A."/>
            <person name="Fujiwara T."/>
            <person name="Ono T."/>
            <person name="Yamada K."/>
            <person name="Fujii Y."/>
            <person name="Ozaki K."/>
            <person name="Hirao M."/>
            <person name="Ohmori Y."/>
            <person name="Kawabata A."/>
            <person name="Hikiji T."/>
            <person name="Kobatake N."/>
            <person name="Inagaki H."/>
            <person name="Ikema Y."/>
            <person name="Okamoto S."/>
            <person name="Okitani R."/>
            <person name="Kawakami T."/>
            <person name="Noguchi S."/>
            <person name="Itoh T."/>
            <person name="Shigeta K."/>
            <person name="Senba T."/>
            <person name="Matsumura K."/>
            <person name="Nakajima Y."/>
            <person name="Mizuno T."/>
            <person name="Morinaga M."/>
            <person name="Sasaki M."/>
            <person name="Togashi T."/>
            <person name="Oyama M."/>
            <person name="Hata H."/>
            <person name="Watanabe M."/>
            <person name="Komatsu T."/>
            <person name="Mizushima-Sugano J."/>
            <person name="Satoh T."/>
            <person name="Shirai Y."/>
            <person name="Takahashi Y."/>
            <person name="Nakagawa K."/>
            <person name="Okumura K."/>
            <person name="Nagase T."/>
            <person name="Nomura N."/>
            <person name="Kikuchi H."/>
            <person name="Masuho Y."/>
            <person name="Yamashita R."/>
            <person name="Nakai K."/>
            <person name="Yada T."/>
            <person name="Nakamura Y."/>
            <person name="Ohara O."/>
            <person name="Isogai T."/>
            <person name="Sugano S."/>
        </authorList>
    </citation>
    <scope>NUCLEOTIDE SEQUENCE [LARGE SCALE MRNA] (ISOFORMS 2 AND 3)</scope>
    <source>
        <tissue>Testis</tissue>
    </source>
</reference>
<reference key="5">
    <citation type="journal article" date="2003" name="Nature">
        <title>The DNA sequence and analysis of human chromosome 6.</title>
        <authorList>
            <person name="Mungall A.J."/>
            <person name="Palmer S.A."/>
            <person name="Sims S.K."/>
            <person name="Edwards C.A."/>
            <person name="Ashurst J.L."/>
            <person name="Wilming L."/>
            <person name="Jones M.C."/>
            <person name="Horton R."/>
            <person name="Hunt S.E."/>
            <person name="Scott C.E."/>
            <person name="Gilbert J.G.R."/>
            <person name="Clamp M.E."/>
            <person name="Bethel G."/>
            <person name="Milne S."/>
            <person name="Ainscough R."/>
            <person name="Almeida J.P."/>
            <person name="Ambrose K.D."/>
            <person name="Andrews T.D."/>
            <person name="Ashwell R.I.S."/>
            <person name="Babbage A.K."/>
            <person name="Bagguley C.L."/>
            <person name="Bailey J."/>
            <person name="Banerjee R."/>
            <person name="Barker D.J."/>
            <person name="Barlow K.F."/>
            <person name="Bates K."/>
            <person name="Beare D.M."/>
            <person name="Beasley H."/>
            <person name="Beasley O."/>
            <person name="Bird C.P."/>
            <person name="Blakey S.E."/>
            <person name="Bray-Allen S."/>
            <person name="Brook J."/>
            <person name="Brown A.J."/>
            <person name="Brown J.Y."/>
            <person name="Burford D.C."/>
            <person name="Burrill W."/>
            <person name="Burton J."/>
            <person name="Carder C."/>
            <person name="Carter N.P."/>
            <person name="Chapman J.C."/>
            <person name="Clark S.Y."/>
            <person name="Clark G."/>
            <person name="Clee C.M."/>
            <person name="Clegg S."/>
            <person name="Cobley V."/>
            <person name="Collier R.E."/>
            <person name="Collins J.E."/>
            <person name="Colman L.K."/>
            <person name="Corby N.R."/>
            <person name="Coville G.J."/>
            <person name="Culley K.M."/>
            <person name="Dhami P."/>
            <person name="Davies J."/>
            <person name="Dunn M."/>
            <person name="Earthrowl M.E."/>
            <person name="Ellington A.E."/>
            <person name="Evans K.A."/>
            <person name="Faulkner L."/>
            <person name="Francis M.D."/>
            <person name="Frankish A."/>
            <person name="Frankland J."/>
            <person name="French L."/>
            <person name="Garner P."/>
            <person name="Garnett J."/>
            <person name="Ghori M.J."/>
            <person name="Gilby L.M."/>
            <person name="Gillson C.J."/>
            <person name="Glithero R.J."/>
            <person name="Grafham D.V."/>
            <person name="Grant M."/>
            <person name="Gribble S."/>
            <person name="Griffiths C."/>
            <person name="Griffiths M.N.D."/>
            <person name="Hall R."/>
            <person name="Halls K.S."/>
            <person name="Hammond S."/>
            <person name="Harley J.L."/>
            <person name="Hart E.A."/>
            <person name="Heath P.D."/>
            <person name="Heathcott R."/>
            <person name="Holmes S.J."/>
            <person name="Howden P.J."/>
            <person name="Howe K.L."/>
            <person name="Howell G.R."/>
            <person name="Huckle E."/>
            <person name="Humphray S.J."/>
            <person name="Humphries M.D."/>
            <person name="Hunt A.R."/>
            <person name="Johnson C.M."/>
            <person name="Joy A.A."/>
            <person name="Kay M."/>
            <person name="Keenan S.J."/>
            <person name="Kimberley A.M."/>
            <person name="King A."/>
            <person name="Laird G.K."/>
            <person name="Langford C."/>
            <person name="Lawlor S."/>
            <person name="Leongamornlert D.A."/>
            <person name="Leversha M."/>
            <person name="Lloyd C.R."/>
            <person name="Lloyd D.M."/>
            <person name="Loveland J.E."/>
            <person name="Lovell J."/>
            <person name="Martin S."/>
            <person name="Mashreghi-Mohammadi M."/>
            <person name="Maslen G.L."/>
            <person name="Matthews L."/>
            <person name="McCann O.T."/>
            <person name="McLaren S.J."/>
            <person name="McLay K."/>
            <person name="McMurray A."/>
            <person name="Moore M.J.F."/>
            <person name="Mullikin J.C."/>
            <person name="Niblett D."/>
            <person name="Nickerson T."/>
            <person name="Novik K.L."/>
            <person name="Oliver K."/>
            <person name="Overton-Larty E.K."/>
            <person name="Parker A."/>
            <person name="Patel R."/>
            <person name="Pearce A.V."/>
            <person name="Peck A.I."/>
            <person name="Phillimore B.J.C.T."/>
            <person name="Phillips S."/>
            <person name="Plumb R.W."/>
            <person name="Porter K.M."/>
            <person name="Ramsey Y."/>
            <person name="Ranby S.A."/>
            <person name="Rice C.M."/>
            <person name="Ross M.T."/>
            <person name="Searle S.M."/>
            <person name="Sehra H.K."/>
            <person name="Sheridan E."/>
            <person name="Skuce C.D."/>
            <person name="Smith S."/>
            <person name="Smith M."/>
            <person name="Spraggon L."/>
            <person name="Squares S.L."/>
            <person name="Steward C.A."/>
            <person name="Sycamore N."/>
            <person name="Tamlyn-Hall G."/>
            <person name="Tester J."/>
            <person name="Theaker A.J."/>
            <person name="Thomas D.W."/>
            <person name="Thorpe A."/>
            <person name="Tracey A."/>
            <person name="Tromans A."/>
            <person name="Tubby B."/>
            <person name="Wall M."/>
            <person name="Wallis J.M."/>
            <person name="West A.P."/>
            <person name="White S.S."/>
            <person name="Whitehead S.L."/>
            <person name="Whittaker H."/>
            <person name="Wild A."/>
            <person name="Willey D.J."/>
            <person name="Wilmer T.E."/>
            <person name="Wood J.M."/>
            <person name="Wray P.W."/>
            <person name="Wyatt J.C."/>
            <person name="Young L."/>
            <person name="Younger R.M."/>
            <person name="Bentley D.R."/>
            <person name="Coulson A."/>
            <person name="Durbin R.M."/>
            <person name="Hubbard T."/>
            <person name="Sulston J.E."/>
            <person name="Dunham I."/>
            <person name="Rogers J."/>
            <person name="Beck S."/>
        </authorList>
    </citation>
    <scope>NUCLEOTIDE SEQUENCE [LARGE SCALE GENOMIC DNA]</scope>
</reference>
<reference key="6">
    <citation type="submission" date="2005-07" db="EMBL/GenBank/DDBJ databases">
        <authorList>
            <person name="Mural R.J."/>
            <person name="Istrail S."/>
            <person name="Sutton G.G."/>
            <person name="Florea L."/>
            <person name="Halpern A.L."/>
            <person name="Mobarry C.M."/>
            <person name="Lippert R."/>
            <person name="Walenz B."/>
            <person name="Shatkay H."/>
            <person name="Dew I."/>
            <person name="Miller J.R."/>
            <person name="Flanigan M.J."/>
            <person name="Edwards N.J."/>
            <person name="Bolanos R."/>
            <person name="Fasulo D."/>
            <person name="Halldorsson B.V."/>
            <person name="Hannenhalli S."/>
            <person name="Turner R."/>
            <person name="Yooseph S."/>
            <person name="Lu F."/>
            <person name="Nusskern D.R."/>
            <person name="Shue B.C."/>
            <person name="Zheng X.H."/>
            <person name="Zhong F."/>
            <person name="Delcher A.L."/>
            <person name="Huson D.H."/>
            <person name="Kravitz S.A."/>
            <person name="Mouchard L."/>
            <person name="Reinert K."/>
            <person name="Remington K.A."/>
            <person name="Clark A.G."/>
            <person name="Waterman M.S."/>
            <person name="Eichler E.E."/>
            <person name="Adams M.D."/>
            <person name="Hunkapiller M.W."/>
            <person name="Myers E.W."/>
            <person name="Venter J.C."/>
        </authorList>
    </citation>
    <scope>NUCLEOTIDE SEQUENCE [LARGE SCALE GENOMIC DNA]</scope>
</reference>
<reference key="7">
    <citation type="journal article" date="2004" name="Genome Res.">
        <title>The status, quality, and expansion of the NIH full-length cDNA project: the Mammalian Gene Collection (MGC).</title>
        <authorList>
            <consortium name="The MGC Project Team"/>
        </authorList>
    </citation>
    <scope>NUCLEOTIDE SEQUENCE [LARGE SCALE MRNA] (ISOFORM 1)</scope>
    <source>
        <tissue>Retinal pigment epithelium</tissue>
        <tissue>Skin</tissue>
    </source>
</reference>
<reference key="8">
    <citation type="journal article" date="1999" name="Cell">
        <title>NELF, a multisubunit complex containing RD, cooperates with DSIF to repress RNA polymerase II elongation.</title>
        <authorList>
            <person name="Yamaguchi Y."/>
            <person name="Takagi T."/>
            <person name="Wada T."/>
            <person name="Yano K."/>
            <person name="Furuya A."/>
            <person name="Sugimoto S."/>
            <person name="Hasegawa J."/>
            <person name="Handa H."/>
        </authorList>
    </citation>
    <scope>PROTEIN SEQUENCE OF 48-65 AND 362-373</scope>
    <scope>IDENTIFICATION IN THE NELF COMPLEX</scope>
    <scope>FUNCTION OF THE NELF COMPLEX</scope>
</reference>
<reference key="9">
    <citation type="journal article" date="1990" name="Gene">
        <title>The human RD protein is closely related to nuclear RNA-binding proteins and has been highly conserved.</title>
        <authorList>
            <person name="Surowy C.S."/>
            <person name="Hoganson G."/>
            <person name="Gosink J."/>
            <person name="Strunk K."/>
            <person name="Spritz R.A."/>
        </authorList>
    </citation>
    <scope>NUCLEOTIDE SEQUENCE [MRNA] OF 56-380 (ISOFORM 1)</scope>
    <source>
        <tissue>Liver</tissue>
    </source>
</reference>
<reference key="10">
    <citation type="journal article" date="2002" name="Mol. Cell. Biol.">
        <title>Evidence that negative elongation factor represses transcription elongation through binding to a DRB sensitivity-inducing factor/RNA polymerase II complex and RNA.</title>
        <authorList>
            <person name="Yamaguchi Y."/>
            <person name="Inukai N."/>
            <person name="Narita T."/>
            <person name="Wada T."/>
            <person name="Handa H."/>
        </authorList>
    </citation>
    <scope>FUNCTION</scope>
    <scope>RNA-BINDING</scope>
    <scope>DOMAIN</scope>
    <scope>MUTAGENESIS OF 295-ARG--PHE-299</scope>
</reference>
<reference key="11">
    <citation type="journal article" date="2003" name="Mol. Cell. Biol.">
        <title>Human transcription elongation factor NELF: identification of novel subunits and reconstitution of the functionally active complex.</title>
        <authorList>
            <person name="Narita T."/>
            <person name="Yamaguchi Y."/>
            <person name="Yano K."/>
            <person name="Sugimoto S."/>
            <person name="Chanarat S."/>
            <person name="Wada T."/>
            <person name="Kim D.-K."/>
            <person name="Hasegawa J."/>
            <person name="Omori M."/>
            <person name="Inukai N."/>
            <person name="Endoh M."/>
            <person name="Yamada T."/>
            <person name="Handa H."/>
        </authorList>
    </citation>
    <scope>FUNCTION</scope>
    <scope>TISSUE SPECIFICITY</scope>
</reference>
<reference key="12">
    <citation type="journal article" date="2004" name="Mol. Cell. Biol.">
        <title>Dynamics of human immunodeficiency virus transcription: P-TEFb phosphorylates RD and dissociates negative effectors from the transactivation response element.</title>
        <authorList>
            <person name="Fujinaga K."/>
            <person name="Irwin D."/>
            <person name="Huang Y."/>
            <person name="Taube R."/>
            <person name="Kurosu T."/>
            <person name="Peterlin B.M."/>
        </authorList>
    </citation>
    <scope>SUBCELLULAR LOCATION</scope>
    <scope>PHOSPHORYLATION AT SER-181; SER-185; SER-187 AND SER-191</scope>
    <scope>MUTAGENESIS OF 181-SER--SER-191</scope>
</reference>
<reference key="13">
    <citation type="journal article" date="2005" name="J. Biol. Chem.">
        <title>Systematic identification and analysis of mammalian small ubiquitin-like modifier substrates.</title>
        <authorList>
            <person name="Gocke C.B."/>
            <person name="Yu H."/>
            <person name="Kang J."/>
        </authorList>
    </citation>
    <scope>SUMOYLATION</scope>
</reference>
<reference key="14">
    <citation type="journal article" date="2006" name="Cell">
        <title>Global, in vivo, and site-specific phosphorylation dynamics in signaling networks.</title>
        <authorList>
            <person name="Olsen J.V."/>
            <person name="Blagoev B."/>
            <person name="Gnad F."/>
            <person name="Macek B."/>
            <person name="Kumar C."/>
            <person name="Mortensen P."/>
            <person name="Mann M."/>
        </authorList>
    </citation>
    <scope>IDENTIFICATION BY MASS SPECTROMETRY [LARGE SCALE ANALYSIS]</scope>
    <source>
        <tissue>Cervix carcinoma</tissue>
    </source>
</reference>
<reference key="15">
    <citation type="journal article" date="2006" name="Nat. Biotechnol.">
        <title>A probability-based approach for high-throughput protein phosphorylation analysis and site localization.</title>
        <authorList>
            <person name="Beausoleil S.A."/>
            <person name="Villen J."/>
            <person name="Gerber S.A."/>
            <person name="Rush J."/>
            <person name="Gygi S.P."/>
        </authorList>
    </citation>
    <scope>PHOSPHORYLATION [LARGE SCALE ANALYSIS] AT SER-115 AND SER-353</scope>
    <scope>IDENTIFICATION BY MASS SPECTROMETRY [LARGE SCALE ANALYSIS]</scope>
    <source>
        <tissue>Cervix carcinoma</tissue>
    </source>
</reference>
<reference key="16">
    <citation type="journal article" date="2008" name="J. Proteome Res.">
        <title>Combining protein-based IMAC, peptide-based IMAC, and MudPIT for efficient phosphoproteomic analysis.</title>
        <authorList>
            <person name="Cantin G.T."/>
            <person name="Yi W."/>
            <person name="Lu B."/>
            <person name="Park S.K."/>
            <person name="Xu T."/>
            <person name="Lee J.-D."/>
            <person name="Yates J.R. III"/>
        </authorList>
    </citation>
    <scope>PHOSPHORYLATION [LARGE SCALE ANALYSIS] AT SER-281</scope>
    <scope>IDENTIFICATION BY MASS SPECTROMETRY [LARGE SCALE ANALYSIS]</scope>
    <source>
        <tissue>Cervix carcinoma</tissue>
    </source>
</reference>
<reference key="17">
    <citation type="journal article" date="2008" name="Mol. Cell">
        <title>Kinase-selective enrichment enables quantitative phosphoproteomics of the kinome across the cell cycle.</title>
        <authorList>
            <person name="Daub H."/>
            <person name="Olsen J.V."/>
            <person name="Bairlein M."/>
            <person name="Gnad F."/>
            <person name="Oppermann F.S."/>
            <person name="Korner R."/>
            <person name="Greff Z."/>
            <person name="Keri G."/>
            <person name="Stemmann O."/>
            <person name="Mann M."/>
        </authorList>
    </citation>
    <scope>IDENTIFICATION BY MASS SPECTROMETRY [LARGE SCALE ANALYSIS]</scope>
    <source>
        <tissue>Cervix carcinoma</tissue>
    </source>
</reference>
<reference key="18">
    <citation type="journal article" date="2008" name="Proc. Natl. Acad. Sci. U.S.A.">
        <title>A quantitative atlas of mitotic phosphorylation.</title>
        <authorList>
            <person name="Dephoure N."/>
            <person name="Zhou C."/>
            <person name="Villen J."/>
            <person name="Beausoleil S.A."/>
            <person name="Bakalarski C.E."/>
            <person name="Elledge S.J."/>
            <person name="Gygi S.P."/>
        </authorList>
    </citation>
    <scope>PHOSPHORYLATION [LARGE SCALE ANALYSIS] AT SER-113; SER-131; SER-251; THR-272; THR-274; SER-281 AND SER-353</scope>
    <scope>IDENTIFICATION BY MASS SPECTROMETRY [LARGE SCALE ANALYSIS]</scope>
    <source>
        <tissue>Cervix carcinoma</tissue>
    </source>
</reference>
<reference key="19">
    <citation type="journal article" date="2009" name="Anal. Chem.">
        <title>Lys-N and trypsin cover complementary parts of the phosphoproteome in a refined SCX-based approach.</title>
        <authorList>
            <person name="Gauci S."/>
            <person name="Helbig A.O."/>
            <person name="Slijper M."/>
            <person name="Krijgsveld J."/>
            <person name="Heck A.J."/>
            <person name="Mohammed S."/>
        </authorList>
    </citation>
    <scope>IDENTIFICATION BY MASS SPECTROMETRY [LARGE SCALE ANALYSIS]</scope>
</reference>
<reference key="20">
    <citation type="journal article" date="2009" name="Mol. Cell. Proteomics">
        <title>Large-scale proteomics analysis of the human kinome.</title>
        <authorList>
            <person name="Oppermann F.S."/>
            <person name="Gnad F."/>
            <person name="Olsen J.V."/>
            <person name="Hornberger R."/>
            <person name="Greff Z."/>
            <person name="Keri G."/>
            <person name="Mann M."/>
            <person name="Daub H."/>
        </authorList>
    </citation>
    <scope>IDENTIFICATION BY MASS SPECTROMETRY [LARGE SCALE ANALYSIS]</scope>
</reference>
<reference key="21">
    <citation type="journal article" date="2009" name="Sci. Signal.">
        <title>Quantitative phosphoproteomic analysis of T cell receptor signaling reveals system-wide modulation of protein-protein interactions.</title>
        <authorList>
            <person name="Mayya V."/>
            <person name="Lundgren D.H."/>
            <person name="Hwang S.-I."/>
            <person name="Rezaul K."/>
            <person name="Wu L."/>
            <person name="Eng J.K."/>
            <person name="Rodionov V."/>
            <person name="Han D.K."/>
        </authorList>
    </citation>
    <scope>PHOSPHORYLATION [LARGE SCALE ANALYSIS] AT SER-131 AND SER-353</scope>
    <scope>IDENTIFICATION BY MASS SPECTROMETRY [LARGE SCALE ANALYSIS]</scope>
    <source>
        <tissue>Leukemic T-cell</tissue>
    </source>
</reference>
<reference key="22">
    <citation type="journal article" date="2010" name="Sci. Signal.">
        <title>Quantitative phosphoproteomics reveals widespread full phosphorylation site occupancy during mitosis.</title>
        <authorList>
            <person name="Olsen J.V."/>
            <person name="Vermeulen M."/>
            <person name="Santamaria A."/>
            <person name="Kumar C."/>
            <person name="Miller M.L."/>
            <person name="Jensen L.J."/>
            <person name="Gnad F."/>
            <person name="Cox J."/>
            <person name="Jensen T.S."/>
            <person name="Nigg E.A."/>
            <person name="Brunak S."/>
            <person name="Mann M."/>
        </authorList>
    </citation>
    <scope>PHOSPHORYLATION [LARGE SCALE ANALYSIS] AT SER-115; SER-131; SER-281 AND SER-353</scope>
    <scope>IDENTIFICATION BY MASS SPECTROMETRY [LARGE SCALE ANALYSIS]</scope>
    <source>
        <tissue>Cervix carcinoma</tissue>
    </source>
</reference>
<reference key="23">
    <citation type="journal article" date="2011" name="BMC Syst. Biol.">
        <title>Initial characterization of the human central proteome.</title>
        <authorList>
            <person name="Burkard T.R."/>
            <person name="Planyavsky M."/>
            <person name="Kaupe I."/>
            <person name="Breitwieser F.P."/>
            <person name="Buerckstuemmer T."/>
            <person name="Bennett K.L."/>
            <person name="Superti-Furga G."/>
            <person name="Colinge J."/>
        </authorList>
    </citation>
    <scope>IDENTIFICATION BY MASS SPECTROMETRY [LARGE SCALE ANALYSIS]</scope>
</reference>
<reference key="24">
    <citation type="journal article" date="2011" name="Sci. Signal.">
        <title>System-wide temporal characterization of the proteome and phosphoproteome of human embryonic stem cell differentiation.</title>
        <authorList>
            <person name="Rigbolt K.T."/>
            <person name="Prokhorova T.A."/>
            <person name="Akimov V."/>
            <person name="Henningsen J."/>
            <person name="Johansen P.T."/>
            <person name="Kratchmarova I."/>
            <person name="Kassem M."/>
            <person name="Mann M."/>
            <person name="Olsen J.V."/>
            <person name="Blagoev B."/>
        </authorList>
    </citation>
    <scope>PHOSPHORYLATION [LARGE SCALE ANALYSIS] AT SER-115; SER-181; SER-185 AND SER-251</scope>
    <scope>IDENTIFICATION BY MASS SPECTROMETRY [LARGE SCALE ANALYSIS]</scope>
</reference>
<reference key="25">
    <citation type="journal article" date="2013" name="J. Biol. Chem.">
        <title>Negative elongation factor (NELF) coordinates RNA polymerase II pausing, premature termination, and chromatin remodeling to regulate HIV transcription.</title>
        <authorList>
            <person name="Natarajan M."/>
            <person name="Schiralli Lester G.M."/>
            <person name="Lee C."/>
            <person name="Missra A."/>
            <person name="Wasserman G.A."/>
            <person name="Steffen M."/>
            <person name="Gilmour D.S."/>
            <person name="Henderson A.J."/>
        </authorList>
    </citation>
    <scope>FUNCTION OF THE NELF COMPLEX IN HIV-1 LATENCY (MICROBIAL INFECTION)</scope>
</reference>
<reference key="26">
    <citation type="journal article" date="2013" name="J. Proteome Res.">
        <title>Toward a comprehensive characterization of a human cancer cell phosphoproteome.</title>
        <authorList>
            <person name="Zhou H."/>
            <person name="Di Palma S."/>
            <person name="Preisinger C."/>
            <person name="Peng M."/>
            <person name="Polat A.N."/>
            <person name="Heck A.J."/>
            <person name="Mohammed S."/>
        </authorList>
    </citation>
    <scope>PHOSPHORYLATION [LARGE SCALE ANALYSIS] AT SER-51; SER-115; SER-131; SER-139; SER-165; SER-249; SER-251 AND SER-353</scope>
    <scope>IDENTIFICATION BY MASS SPECTROMETRY [LARGE SCALE ANALYSIS]</scope>
    <source>
        <tissue>Cervix carcinoma</tissue>
        <tissue>Erythroleukemia</tissue>
    </source>
</reference>
<reference key="27">
    <citation type="journal article" date="2014" name="J. Proteomics">
        <title>An enzyme assisted RP-RPLC approach for in-depth analysis of human liver phosphoproteome.</title>
        <authorList>
            <person name="Bian Y."/>
            <person name="Song C."/>
            <person name="Cheng K."/>
            <person name="Dong M."/>
            <person name="Wang F."/>
            <person name="Huang J."/>
            <person name="Sun D."/>
            <person name="Wang L."/>
            <person name="Ye M."/>
            <person name="Zou H."/>
        </authorList>
    </citation>
    <scope>PHOSPHORYLATION [LARGE SCALE ANALYSIS] AT SER-179</scope>
    <scope>IDENTIFICATION BY MASS SPECTROMETRY [LARGE SCALE ANALYSIS]</scope>
    <source>
        <tissue>Liver</tissue>
    </source>
</reference>
<reference key="28">
    <citation type="journal article" date="2014" name="Proc. Natl. Acad. Sci. U.S.A.">
        <title>Mapping of SUMO sites and analysis of SUMOylation changes induced by external stimuli.</title>
        <authorList>
            <person name="Impens F."/>
            <person name="Radoshevich L."/>
            <person name="Cossart P."/>
            <person name="Ribet D."/>
        </authorList>
    </citation>
    <scope>SUMOYLATION [LARGE SCALE ANALYSIS] AT LYS-78</scope>
    <scope>IDENTIFICATION BY MASS SPECTROMETRY [LARGE SCALE ANALYSIS]</scope>
</reference>
<reference key="29">
    <citation type="journal article" date="2016" name="Elife">
        <title>Architecture and RNA binding of the human negative elongation factor.</title>
        <authorList>
            <person name="Vos S.M."/>
            <person name="Pollmann D."/>
            <person name="Caizzi L."/>
            <person name="Hofmann K.B."/>
            <person name="Rombaut P."/>
            <person name="Zimniak T."/>
            <person name="Herzog F."/>
            <person name="Cramer P."/>
        </authorList>
    </citation>
    <scope>RECONSTITUTION OF THE NELF COMPLEX</scope>
    <scope>RNA BINDING</scope>
</reference>
<reference key="30">
    <citation type="journal article" date="2016" name="Science">
        <title>Chemical genetic discovery of PARP targets reveals a role for PARP-1 in transcription elongation.</title>
        <authorList>
            <person name="Gibson B.A."/>
            <person name="Zhang Y."/>
            <person name="Jiang H."/>
            <person name="Hussey K.M."/>
            <person name="Shrimp J.H."/>
            <person name="Lin H."/>
            <person name="Schwede F."/>
            <person name="Yu Y."/>
            <person name="Kraus W.L."/>
        </authorList>
    </citation>
    <scope>FUNCTION</scope>
    <scope>RNA BINDING</scope>
    <scope>ADP-RIBOSYLATION AT GLU-122; GLU-151; GLU-172 AND GLU-374</scope>
    <scope>MUTAGENESIS OF GLU-122; GLU-151; GLU-171 AND GLU-374</scope>
</reference>
<reference key="31">
    <citation type="journal article" date="2017" name="Nat. Struct. Mol. Biol.">
        <title>Site-specific mapping of the human SUMO proteome reveals co-modification with phosphorylation.</title>
        <authorList>
            <person name="Hendriks I.A."/>
            <person name="Lyon D."/>
            <person name="Young C."/>
            <person name="Jensen L.J."/>
            <person name="Vertegaal A.C."/>
            <person name="Nielsen M.L."/>
        </authorList>
    </citation>
    <scope>SUMOYLATION [LARGE SCALE ANALYSIS] AT LYS-78 AND LYS-82</scope>
    <scope>IDENTIFICATION BY MASS SPECTROMETRY [LARGE SCALE ANALYSIS]</scope>
</reference>
<reference key="32">
    <citation type="journal article" date="2006" name="Biochem. J.">
        <title>Structural studies on the RNA-recognition motif of NELF E, a cellular negative transcription elongation factor involved in the regulation of HIV transcription.</title>
        <authorList>
            <person name="Rao J.N."/>
            <person name="Neumann L."/>
            <person name="Wenzel S."/>
            <person name="Schweimer K."/>
            <person name="Rosch P."/>
            <person name="Wohrl B.M."/>
        </authorList>
    </citation>
    <scope>STRUCTURE BY NMR OF 244-343</scope>
    <scope>RNA-BINDING (MICROBIAL INFECTION)</scope>
</reference>
<reference key="33">
    <citation type="journal article" date="2008" name="Biochemistry">
        <title>NELF-E RRM undergoes major structural changes in flexible protein regions on target RNA binding.</title>
        <authorList>
            <person name="Rao J.N."/>
            <person name="Schweimer K."/>
            <person name="Wenzel S."/>
            <person name="Wohrl B.M."/>
            <person name="Rosch P."/>
        </authorList>
    </citation>
    <scope>STRUCTURE BY NMR OF 244-343</scope>
    <scope>RNA-BINDING</scope>
</reference>
<reference key="34">
    <citation type="submission" date="2005-11" db="PDB data bank">
        <title>Solution structure of RRM domain in PARP14.</title>
        <authorList>
            <consortium name="RIKEN structural genomics initiative (RSGI)"/>
        </authorList>
    </citation>
    <scope>STRUCTURE BY NMR OF 254-337</scope>
</reference>
<comment type="function">
    <text evidence="5 6 7 11 13 14">Essential component of the NELF complex, a complex that negatively regulates the elongation of transcription by RNA polymerase II (PubMed:10199401, PubMed:27256882). The NELF complex, which acts via an association with the DSIF complex and causes transcriptional pausing, is counteracted by the P-TEFb kinase complex (PubMed:11940650, PubMed:12612062, PubMed:27256882). Provides the strongest RNA binding activity of the NELF complex and may initially recruit the NELF complex to RNA (PubMed:18303858, PubMed:27256882, PubMed:27282391).</text>
</comment>
<comment type="function">
    <text evidence="12">(Microbial infection) The NELF complex is involved in HIV-1 latency possibly involving recruitment of PCF11 to paused RNA polymerase II.</text>
</comment>
<comment type="subunit">
    <text evidence="1 5 14">The NELF complex is composed of NELFA, NELFB, NELFCD (isoform NELF-C or isoform NELF-D) and NELFE (PubMed:10199401, PubMed:27282391). Interacts with NELFB (By similarity).</text>
</comment>
<comment type="subunit">
    <text evidence="10">(Microbial infection) Binds to the HIV-1 TAR RNA which is located in the long terminal repeat (LTR) of HIV-1.</text>
</comment>
<comment type="interaction">
    <interactant intactId="EBI-348444">
        <id>P18615</id>
    </interactant>
    <interactant intactId="EBI-2808286">
        <id>Q2TAC2</id>
        <label>CCDC57</label>
    </interactant>
    <organismsDiffer>false</organismsDiffer>
    <experiments>3</experiments>
</comment>
<comment type="interaction">
    <interactant intactId="EBI-348444">
        <id>P18615</id>
    </interactant>
    <interactant intactId="EBI-2556193">
        <id>Q63ZY3</id>
        <label>KANK2</label>
    </interactant>
    <organismsDiffer>false</organismsDiffer>
    <experiments>3</experiments>
</comment>
<comment type="interaction">
    <interactant intactId="EBI-348444">
        <id>P18615</id>
    </interactant>
    <interactant intactId="EBI-742948">
        <id>Q5JR59</id>
        <label>MTUS2</label>
    </interactant>
    <organismsDiffer>false</organismsDiffer>
    <experiments>3</experiments>
</comment>
<comment type="interaction">
    <interactant intactId="EBI-348444">
        <id>P18615</id>
    </interactant>
    <interactant intactId="EBI-347721">
        <id>Q8WX92</id>
        <label>NELFB</label>
    </interactant>
    <organismsDiffer>false</organismsDiffer>
    <experiments>9</experiments>
</comment>
<comment type="interaction">
    <interactant intactId="EBI-348444">
        <id>P18615</id>
    </interactant>
    <interactant intactId="EBI-22734860">
        <id>Q8WX92-2</id>
        <label>NELFB</label>
    </interactant>
    <organismsDiffer>false</organismsDiffer>
    <experiments>7</experiments>
</comment>
<comment type="interaction">
    <interactant intactId="EBI-348444">
        <id>P18615</id>
    </interactant>
    <interactant intactId="EBI-719493">
        <id>P14373</id>
        <label>TRIM27</label>
    </interactant>
    <organismsDiffer>false</organismsDiffer>
    <experiments>3</experiments>
</comment>
<comment type="subcellular location">
    <subcellularLocation>
        <location evidence="8">Nucleus</location>
    </subcellularLocation>
    <subcellularLocation>
        <location evidence="8">Chromosome</location>
    </subcellularLocation>
    <text evidence="8">Localizes to chromatin (PubMed:14701750). Phosphorylation by the P-TEFb complex promotes its release from chromatin (PubMed:14701750).</text>
</comment>
<comment type="alternative products">
    <event type="alternative splicing"/>
    <isoform>
        <id>P18615-1</id>
        <name>1</name>
        <sequence type="displayed"/>
    </isoform>
    <isoform>
        <id>P18615-3</id>
        <name>2</name>
        <sequence type="described" ref="VSP_056151"/>
    </isoform>
    <isoform>
        <id>P18615-4</id>
        <name>3</name>
        <sequence type="described" ref="VSP_056152"/>
    </isoform>
</comment>
<comment type="tissue specificity">
    <text evidence="7">Widely expressed. Expressed in heart, brain, lung, placenta, liver, skeletal muscle, kidney and pancreas.</text>
</comment>
<comment type="domain">
    <text evidence="6">The RRM domain interacts with RNA, and is essential for NELF complex function. It is however not required for the NELF complex formation.</text>
</comment>
<comment type="PTM">
    <text evidence="8">Phosphorylated by the P-TEFb complex at sites next to its RNA recognition motif, promoting its release from chromatin.</text>
</comment>
<comment type="PTM">
    <text evidence="9">Sumoylated.</text>
</comment>
<comment type="PTM">
    <text evidence="13">Poly-ADP-ribosylated by PARP1, thereby preventing RNA-binding and relieving transcription pausing.</text>
</comment>
<comment type="similarity">
    <text evidence="17">Belongs to the RRM NELF-E family.</text>
</comment>
<feature type="chain" id="PRO_0000081802" description="Negative elongation factor E">
    <location>
        <begin position="1"/>
        <end position="380"/>
    </location>
</feature>
<feature type="repeat" description="1">
    <location>
        <begin position="184"/>
        <end position="185"/>
    </location>
</feature>
<feature type="repeat" description="2">
    <location>
        <begin position="186"/>
        <end position="187"/>
    </location>
</feature>
<feature type="repeat" description="3">
    <location>
        <begin position="188"/>
        <end position="189"/>
    </location>
</feature>
<feature type="repeat" description="4">
    <location>
        <begin position="190"/>
        <end position="191"/>
    </location>
</feature>
<feature type="repeat" description="5; approximate">
    <location>
        <begin position="192"/>
        <end position="193"/>
    </location>
</feature>
<feature type="repeat" description="6">
    <location>
        <begin position="194"/>
        <end position="195"/>
    </location>
</feature>
<feature type="repeat" description="7">
    <location>
        <begin position="196"/>
        <end position="197"/>
    </location>
</feature>
<feature type="repeat" description="8">
    <location>
        <begin position="198"/>
        <end position="199"/>
    </location>
</feature>
<feature type="repeat" description="9">
    <location>
        <begin position="200"/>
        <end position="201"/>
    </location>
</feature>
<feature type="repeat" description="10">
    <location>
        <begin position="202"/>
        <end position="203"/>
    </location>
</feature>
<feature type="repeat" description="11">
    <location>
        <begin position="204"/>
        <end position="205"/>
    </location>
</feature>
<feature type="repeat" description="12">
    <location>
        <begin position="206"/>
        <end position="207"/>
    </location>
</feature>
<feature type="repeat" description="13">
    <location>
        <begin position="208"/>
        <end position="209"/>
    </location>
</feature>
<feature type="repeat" description="14">
    <location>
        <begin position="210"/>
        <end position="211"/>
    </location>
</feature>
<feature type="repeat" description="15">
    <location>
        <begin position="212"/>
        <end position="213"/>
    </location>
</feature>
<feature type="repeat" description="16">
    <location>
        <begin position="214"/>
        <end position="215"/>
    </location>
</feature>
<feature type="repeat" description="17">
    <location>
        <begin position="216"/>
        <end position="217"/>
    </location>
</feature>
<feature type="repeat" description="18">
    <location>
        <begin position="218"/>
        <end position="219"/>
    </location>
</feature>
<feature type="repeat" description="19">
    <location>
        <begin position="220"/>
        <end position="221"/>
    </location>
</feature>
<feature type="repeat" description="20">
    <location>
        <begin position="222"/>
        <end position="223"/>
    </location>
</feature>
<feature type="repeat" description="21">
    <location>
        <begin position="224"/>
        <end position="225"/>
    </location>
</feature>
<feature type="repeat" description="22">
    <location>
        <begin position="226"/>
        <end position="227"/>
    </location>
</feature>
<feature type="repeat" description="23">
    <location>
        <begin position="228"/>
        <end position="229"/>
    </location>
</feature>
<feature type="repeat" description="24">
    <location>
        <begin position="230"/>
        <end position="231"/>
    </location>
</feature>
<feature type="repeat" description="25">
    <location>
        <begin position="232"/>
        <end position="233"/>
    </location>
</feature>
<feature type="repeat" description="26">
    <location>
        <begin position="234"/>
        <end position="235"/>
    </location>
</feature>
<feature type="repeat" description="27">
    <location>
        <begin position="236"/>
        <end position="237"/>
    </location>
</feature>
<feature type="repeat" description="28">
    <location>
        <begin position="238"/>
        <end position="239"/>
    </location>
</feature>
<feature type="repeat" description="29">
    <location>
        <begin position="240"/>
        <end position="241"/>
    </location>
</feature>
<feature type="repeat" description="30">
    <location>
        <begin position="242"/>
        <end position="243"/>
    </location>
</feature>
<feature type="domain" description="RRM" evidence="3">
    <location>
        <begin position="262"/>
        <end position="332"/>
    </location>
</feature>
<feature type="region of interest" description="Disordered" evidence="4">
    <location>
        <begin position="30"/>
        <end position="67"/>
    </location>
</feature>
<feature type="region of interest" description="Disordered" evidence="4">
    <location>
        <begin position="79"/>
        <end position="258"/>
    </location>
</feature>
<feature type="region of interest" description="30 X 2 AA approximate tandem repeats of R-[DSNE]">
    <location>
        <begin position="184"/>
        <end position="243"/>
    </location>
</feature>
<feature type="coiled-coil region" evidence="2">
    <location>
        <begin position="7"/>
        <end position="36"/>
    </location>
</feature>
<feature type="compositionally biased region" description="Low complexity" evidence="4">
    <location>
        <begin position="30"/>
        <end position="43"/>
    </location>
</feature>
<feature type="compositionally biased region" description="Basic and acidic residues" evidence="4">
    <location>
        <begin position="90"/>
        <end position="101"/>
    </location>
</feature>
<feature type="compositionally biased region" description="Basic and acidic residues" evidence="4">
    <location>
        <begin position="186"/>
        <end position="256"/>
    </location>
</feature>
<feature type="modified residue" description="Phosphoserine" evidence="25">
    <location>
        <position position="51"/>
    </location>
</feature>
<feature type="modified residue" description="Phosphoserine" evidence="21">
    <location>
        <position position="113"/>
    </location>
</feature>
<feature type="modified residue" description="Phosphoserine" evidence="19 23 24 25">
    <location>
        <position position="115"/>
    </location>
</feature>
<feature type="modified residue" description="PolyADP-ribosyl glutamic acid" evidence="13">
    <location>
        <position position="122"/>
    </location>
</feature>
<feature type="modified residue" description="Phosphoserine" evidence="21 22 23 25">
    <location>
        <position position="131"/>
    </location>
</feature>
<feature type="modified residue" description="Phosphoserine" evidence="25">
    <location>
        <position position="139"/>
    </location>
</feature>
<feature type="modified residue" description="PolyADP-ribosyl glutamic acid" evidence="13">
    <location>
        <position position="151"/>
    </location>
</feature>
<feature type="modified residue" description="Phosphoserine" evidence="25">
    <location>
        <position position="165"/>
    </location>
</feature>
<feature type="modified residue" description="PolyADP-ribosyl glutamic acid" evidence="13">
    <location>
        <position position="172"/>
    </location>
</feature>
<feature type="modified residue" description="Phosphoserine" evidence="26">
    <location>
        <position position="179"/>
    </location>
</feature>
<feature type="modified residue" description="Phosphoserine; by CDK9" evidence="18 24">
    <location>
        <position position="181"/>
    </location>
</feature>
<feature type="modified residue" description="Phosphoserine; by CDK9" evidence="18 24">
    <location>
        <position position="185"/>
    </location>
</feature>
<feature type="modified residue" description="Phosphoserine; by CDK9" evidence="18">
    <location>
        <position position="187"/>
    </location>
</feature>
<feature type="modified residue" description="Phosphoserine; by CDK9" evidence="18">
    <location>
        <position position="191"/>
    </location>
</feature>
<feature type="modified residue" description="Phosphoserine" evidence="25">
    <location>
        <position position="249"/>
    </location>
</feature>
<feature type="modified residue" description="Phosphoserine" evidence="21 24 25">
    <location>
        <position position="251"/>
    </location>
</feature>
<feature type="modified residue" description="Phosphothreonine" evidence="21">
    <location>
        <position position="272"/>
    </location>
</feature>
<feature type="modified residue" description="Phosphothreonine" evidence="21">
    <location>
        <position position="274"/>
    </location>
</feature>
<feature type="modified residue" description="Phosphoserine" evidence="20 21 23">
    <location>
        <position position="281"/>
    </location>
</feature>
<feature type="modified residue" description="Phosphoserine" evidence="19 21 22 23 25">
    <location>
        <position position="353"/>
    </location>
</feature>
<feature type="modified residue" description="PolyADP-ribosyl glutamic acid" evidence="13">
    <location>
        <position position="374"/>
    </location>
</feature>
<feature type="cross-link" description="Glycyl lysine isopeptide (Lys-Gly) (interchain with G-Cter in SUMO1); alternate" evidence="27">
    <location>
        <position position="78"/>
    </location>
</feature>
<feature type="cross-link" description="Glycyl lysine isopeptide (Lys-Gly) (interchain with G-Cter in SUMO2); alternate" evidence="28">
    <location>
        <position position="78"/>
    </location>
</feature>
<feature type="cross-link" description="Glycyl lysine isopeptide (Lys-Gly) (interchain with G-Cter in SUMO2)" evidence="28">
    <location>
        <position position="82"/>
    </location>
</feature>
<feature type="splice variant" id="VSP_056151" description="In isoform 2." evidence="16">
    <original>M</original>
    <variation>MVPKGATM</variation>
    <location>
        <position position="1"/>
    </location>
</feature>
<feature type="splice variant" id="VSP_056152" description="In isoform 3." evidence="16">
    <location>
        <begin position="135"/>
        <end position="164"/>
    </location>
</feature>
<feature type="mutagenesis site" description="Abolished poly-ADP-ribosylation by PARP1; when associated with Q-151; Q-172 and Q-374." evidence="13">
    <original>E</original>
    <variation>Q</variation>
    <location>
        <position position="122"/>
    </location>
</feature>
<feature type="mutagenesis site" description="Abolished poly-ADP-ribosylation by PARP1; when associated with Q-122; Q-172 and Q-374." evidence="13">
    <original>E</original>
    <variation>Q</variation>
    <location>
        <position position="151"/>
    </location>
</feature>
<feature type="mutagenesis site" description="Abolished poly-ADP-ribosylation by PARP1; when associated with Q-122; Q-151 and Q-374." evidence="13">
    <original>E</original>
    <variation>Q</variation>
    <location>
        <position position="171"/>
    </location>
</feature>
<feature type="mutagenesis site" description="Decreased phosphorylation." evidence="8">
    <original>SPPRSRSRDRS</original>
    <variation>APPRARARDRA</variation>
    <location>
        <begin position="181"/>
        <end position="191"/>
    </location>
</feature>
<feature type="mutagenesis site" description="Mimics phosphorylation, promoting its release from chromatin." evidence="8">
    <original>SPPRSRSRDRS</original>
    <variation>EPPRERERDRE</variation>
    <location>
        <begin position="181"/>
        <end position="191"/>
    </location>
</feature>
<feature type="mutagenesis site" description="Abolishes interaction with RNA but not the interaction with other proteins of the NELF complex." evidence="6">
    <original>RNCAF</original>
    <variation>EQMAT</variation>
    <location>
        <begin position="295"/>
        <end position="299"/>
    </location>
</feature>
<feature type="mutagenesis site" description="Abolished poly-ADP-ribosylation by PARP1; when associated with Q-122; Q-151 and Q-172." evidence="13">
    <original>E</original>
    <variation>Q</variation>
    <location>
        <position position="374"/>
    </location>
</feature>
<feature type="sequence conflict" description="In Ref. 1; AAA36308." evidence="17" ref="1">
    <original>D</original>
    <variation>DD</variation>
    <location>
        <position position="119"/>
    </location>
</feature>
<feature type="sequence conflict" description="In Ref. 9; CAA34231." evidence="17" ref="9">
    <original>S</original>
    <variation>M</variation>
    <location>
        <position position="174"/>
    </location>
</feature>
<feature type="sequence conflict" description="In Ref. 1; AAA36308." evidence="17" ref="1">
    <original>Y</original>
    <variation>YD</variation>
    <location>
        <position position="265"/>
    </location>
</feature>
<feature type="sequence conflict" description="In Ref. 1; AAA36308." evidence="17" ref="1">
    <original>V</original>
    <variation>A</variation>
    <location>
        <position position="312"/>
    </location>
</feature>
<feature type="sequence conflict" description="In Ref. 1; AAA36308." evidence="17" ref="1">
    <original>V</original>
    <variation>D</variation>
    <location>
        <position position="327"/>
    </location>
</feature>
<feature type="sequence conflict" description="In Ref. 1; AAA36308." evidence="17" ref="1">
    <original>S</original>
    <variation>A</variation>
    <location>
        <position position="347"/>
    </location>
</feature>
<feature type="helix" evidence="31">
    <location>
        <begin position="19"/>
        <end position="31"/>
    </location>
</feature>
<feature type="strand" evidence="29">
    <location>
        <begin position="262"/>
        <end position="267"/>
    </location>
</feature>
<feature type="helix" evidence="29">
    <location>
        <begin position="273"/>
        <end position="280"/>
    </location>
</feature>
<feature type="turn" evidence="29">
    <location>
        <begin position="281"/>
        <end position="283"/>
    </location>
</feature>
<feature type="strand" evidence="29">
    <location>
        <begin position="286"/>
        <end position="292"/>
    </location>
</feature>
<feature type="turn" evidence="29">
    <location>
        <begin position="293"/>
        <end position="296"/>
    </location>
</feature>
<feature type="strand" evidence="29">
    <location>
        <begin position="297"/>
        <end position="304"/>
    </location>
</feature>
<feature type="helix" evidence="29">
    <location>
        <begin position="305"/>
        <end position="314"/>
    </location>
</feature>
<feature type="turn" evidence="29">
    <location>
        <begin position="315"/>
        <end position="317"/>
    </location>
</feature>
<feature type="strand" evidence="29">
    <location>
        <begin position="318"/>
        <end position="320"/>
    </location>
</feature>
<feature type="strand" evidence="29">
    <location>
        <begin position="323"/>
        <end position="328"/>
    </location>
</feature>
<feature type="turn" evidence="30">
    <location>
        <begin position="334"/>
        <end position="337"/>
    </location>
</feature>
<proteinExistence type="evidence at protein level"/>
<evidence type="ECO:0000250" key="1">
    <source>
        <dbReference type="UniProtKB" id="P19426"/>
    </source>
</evidence>
<evidence type="ECO:0000255" key="2"/>
<evidence type="ECO:0000255" key="3">
    <source>
        <dbReference type="PROSITE-ProRule" id="PRU00176"/>
    </source>
</evidence>
<evidence type="ECO:0000256" key="4">
    <source>
        <dbReference type="SAM" id="MobiDB-lite"/>
    </source>
</evidence>
<evidence type="ECO:0000269" key="5">
    <source>
    </source>
</evidence>
<evidence type="ECO:0000269" key="6">
    <source>
    </source>
</evidence>
<evidence type="ECO:0000269" key="7">
    <source>
    </source>
</evidence>
<evidence type="ECO:0000269" key="8">
    <source>
    </source>
</evidence>
<evidence type="ECO:0000269" key="9">
    <source>
    </source>
</evidence>
<evidence type="ECO:0000269" key="10">
    <source>
    </source>
</evidence>
<evidence type="ECO:0000269" key="11">
    <source>
    </source>
</evidence>
<evidence type="ECO:0000269" key="12">
    <source>
    </source>
</evidence>
<evidence type="ECO:0000269" key="13">
    <source>
    </source>
</evidence>
<evidence type="ECO:0000269" key="14">
    <source>
    </source>
</evidence>
<evidence type="ECO:0000303" key="15">
    <source>
    </source>
</evidence>
<evidence type="ECO:0000303" key="16">
    <source>
    </source>
</evidence>
<evidence type="ECO:0000305" key="17"/>
<evidence type="ECO:0000305" key="18">
    <source>
    </source>
</evidence>
<evidence type="ECO:0007744" key="19">
    <source>
    </source>
</evidence>
<evidence type="ECO:0007744" key="20">
    <source>
    </source>
</evidence>
<evidence type="ECO:0007744" key="21">
    <source>
    </source>
</evidence>
<evidence type="ECO:0007744" key="22">
    <source>
    </source>
</evidence>
<evidence type="ECO:0007744" key="23">
    <source>
    </source>
</evidence>
<evidence type="ECO:0007744" key="24">
    <source>
    </source>
</evidence>
<evidence type="ECO:0007744" key="25">
    <source>
    </source>
</evidence>
<evidence type="ECO:0007744" key="26">
    <source>
    </source>
</evidence>
<evidence type="ECO:0007744" key="27">
    <source>
    </source>
</evidence>
<evidence type="ECO:0007744" key="28">
    <source>
    </source>
</evidence>
<evidence type="ECO:0007829" key="29">
    <source>
        <dbReference type="PDB" id="1X5P"/>
    </source>
</evidence>
<evidence type="ECO:0007829" key="30">
    <source>
        <dbReference type="PDB" id="2JX2"/>
    </source>
</evidence>
<evidence type="ECO:0007829" key="31">
    <source>
        <dbReference type="PDB" id="8UHG"/>
    </source>
</evidence>
<dbReference type="EMBL" id="M33231">
    <property type="protein sequence ID" value="AAA36308.1"/>
    <property type="molecule type" value="Genomic_DNA"/>
</dbReference>
<dbReference type="EMBL" id="M32274">
    <property type="protein sequence ID" value="AAA36308.1"/>
    <property type="status" value="JOINED"/>
    <property type="molecule type" value="Genomic_DNA"/>
</dbReference>
<dbReference type="EMBL" id="M32275">
    <property type="protein sequence ID" value="AAA36308.1"/>
    <property type="status" value="JOINED"/>
    <property type="molecule type" value="Genomic_DNA"/>
</dbReference>
<dbReference type="EMBL" id="M32276">
    <property type="protein sequence ID" value="AAA36308.1"/>
    <property type="status" value="JOINED"/>
    <property type="molecule type" value="Genomic_DNA"/>
</dbReference>
<dbReference type="EMBL" id="M33230">
    <property type="protein sequence ID" value="AAA36308.1"/>
    <property type="status" value="JOINED"/>
    <property type="molecule type" value="Genomic_DNA"/>
</dbReference>
<dbReference type="EMBL" id="L03411">
    <property type="protein sequence ID" value="AAC37523.1"/>
    <property type="molecule type" value="mRNA"/>
</dbReference>
<dbReference type="EMBL" id="AF019413">
    <property type="protein sequence ID" value="AAB67979.1"/>
    <property type="molecule type" value="Genomic_DNA"/>
</dbReference>
<dbReference type="EMBL" id="AK300717">
    <property type="protein sequence ID" value="BAG62393.1"/>
    <property type="molecule type" value="mRNA"/>
</dbReference>
<dbReference type="EMBL" id="AK302652">
    <property type="protein sequence ID" value="BAG63891.1"/>
    <property type="molecule type" value="mRNA"/>
</dbReference>
<dbReference type="EMBL" id="AL049547">
    <property type="protein sequence ID" value="CAB89308.1"/>
    <property type="molecule type" value="Genomic_DNA"/>
</dbReference>
<dbReference type="EMBL" id="AL662849">
    <property type="status" value="NOT_ANNOTATED_CDS"/>
    <property type="molecule type" value="Genomic_DNA"/>
</dbReference>
<dbReference type="EMBL" id="AL844853">
    <property type="status" value="NOT_ANNOTATED_CDS"/>
    <property type="molecule type" value="Genomic_DNA"/>
</dbReference>
<dbReference type="EMBL" id="BX005143">
    <property type="status" value="NOT_ANNOTATED_CDS"/>
    <property type="molecule type" value="Genomic_DNA"/>
</dbReference>
<dbReference type="EMBL" id="CR759782">
    <property type="status" value="NOT_ANNOTATED_CDS"/>
    <property type="molecule type" value="Genomic_DNA"/>
</dbReference>
<dbReference type="EMBL" id="CR388219">
    <property type="status" value="NOT_ANNOTATED_CDS"/>
    <property type="molecule type" value="Genomic_DNA"/>
</dbReference>
<dbReference type="EMBL" id="AL645922">
    <property type="status" value="NOT_ANNOTATED_CDS"/>
    <property type="molecule type" value="Genomic_DNA"/>
</dbReference>
<dbReference type="EMBL" id="CR753845">
    <property type="status" value="NOT_ANNOTATED_CDS"/>
    <property type="molecule type" value="Genomic_DNA"/>
</dbReference>
<dbReference type="EMBL" id="CH471081">
    <property type="protein sequence ID" value="EAX03553.1"/>
    <property type="molecule type" value="Genomic_DNA"/>
</dbReference>
<dbReference type="EMBL" id="BC025235">
    <property type="protein sequence ID" value="AAH25235.1"/>
    <property type="molecule type" value="mRNA"/>
</dbReference>
<dbReference type="EMBL" id="BC050617">
    <property type="protein sequence ID" value="AAH50617.1"/>
    <property type="molecule type" value="mRNA"/>
</dbReference>
<dbReference type="EMBL" id="X16105">
    <property type="protein sequence ID" value="CAA34231.1"/>
    <property type="molecule type" value="mRNA"/>
</dbReference>
<dbReference type="CCDS" id="CCDS4730.1">
    <molecule id="P18615-1"/>
</dbReference>
<dbReference type="PIR" id="S36789">
    <property type="entry name" value="S36789"/>
</dbReference>
<dbReference type="RefSeq" id="NP_002895.3">
    <molecule id="P18615-1"/>
    <property type="nucleotide sequence ID" value="NM_002904.5"/>
</dbReference>
<dbReference type="RefSeq" id="XP_047275310.1">
    <molecule id="P18615-1"/>
    <property type="nucleotide sequence ID" value="XM_047419354.1"/>
</dbReference>
<dbReference type="RefSeq" id="XP_047275311.1">
    <molecule id="P18615-1"/>
    <property type="nucleotide sequence ID" value="XM_047419355.1"/>
</dbReference>
<dbReference type="RefSeq" id="XP_054185880.1">
    <molecule id="P18615-1"/>
    <property type="nucleotide sequence ID" value="XM_054329905.1"/>
</dbReference>
<dbReference type="RefSeq" id="XP_054186372.1">
    <molecule id="P18615-1"/>
    <property type="nucleotide sequence ID" value="XM_054330397.1"/>
</dbReference>
<dbReference type="RefSeq" id="XP_054186864.1">
    <molecule id="P18615-1"/>
    <property type="nucleotide sequence ID" value="XM_054330889.1"/>
</dbReference>
<dbReference type="RefSeq" id="XP_054187148.1">
    <molecule id="P18615-1"/>
    <property type="nucleotide sequence ID" value="XM_054331173.1"/>
</dbReference>
<dbReference type="RefSeq" id="XP_054187387.1">
    <molecule id="P18615-1"/>
    <property type="nucleotide sequence ID" value="XM_054331412.1"/>
</dbReference>
<dbReference type="RefSeq" id="XP_054212384.1">
    <molecule id="P18615-1"/>
    <property type="nucleotide sequence ID" value="XM_054356409.1"/>
</dbReference>
<dbReference type="PDB" id="1X5P">
    <property type="method" value="NMR"/>
    <property type="chains" value="A=254-337"/>
</dbReference>
<dbReference type="PDB" id="2BZ2">
    <property type="method" value="NMR"/>
    <property type="chains" value="A=244-343"/>
</dbReference>
<dbReference type="PDB" id="2JX2">
    <property type="method" value="NMR"/>
    <property type="chains" value="A=244-343"/>
</dbReference>
<dbReference type="PDB" id="5OOB">
    <property type="method" value="X-ray"/>
    <property type="resolution" value="2.79 A"/>
    <property type="chains" value="E/K/Z=360-380"/>
</dbReference>
<dbReference type="PDB" id="6GML">
    <property type="method" value="EM"/>
    <property type="resolution" value="3.20 A"/>
    <property type="chains" value="X=1-380"/>
</dbReference>
<dbReference type="PDB" id="7YCX">
    <property type="method" value="EM"/>
    <property type="resolution" value="4.18 A"/>
    <property type="chains" value="h=1-380"/>
</dbReference>
<dbReference type="PDB" id="8JJ6">
    <property type="method" value="X-ray"/>
    <property type="resolution" value="2.72 A"/>
    <property type="chains" value="E/F=1-50"/>
</dbReference>
<dbReference type="PDB" id="8UHA">
    <property type="method" value="EM"/>
    <property type="resolution" value="3.50 A"/>
    <property type="chains" value="X=1-380"/>
</dbReference>
<dbReference type="PDB" id="8UHD">
    <property type="method" value="EM"/>
    <property type="resolution" value="2.80 A"/>
    <property type="chains" value="X=1-380"/>
</dbReference>
<dbReference type="PDB" id="8UHG">
    <property type="method" value="EM"/>
    <property type="resolution" value="2.70 A"/>
    <property type="chains" value="X=1-380"/>
</dbReference>
<dbReference type="PDB" id="8UI0">
    <property type="method" value="EM"/>
    <property type="resolution" value="2.70 A"/>
    <property type="chains" value="X=1-380"/>
</dbReference>
<dbReference type="PDB" id="8W8E">
    <property type="method" value="EM"/>
    <property type="resolution" value="3.90 A"/>
    <property type="chains" value="X=1-380"/>
</dbReference>
<dbReference type="PDB" id="9J0N">
    <property type="method" value="EM"/>
    <property type="resolution" value="3.40 A"/>
    <property type="chains" value="X=1-380"/>
</dbReference>
<dbReference type="PDB" id="9J0O">
    <property type="method" value="EM"/>
    <property type="resolution" value="3.30 A"/>
    <property type="chains" value="X=1-380"/>
</dbReference>
<dbReference type="PDB" id="9J0P">
    <property type="method" value="EM"/>
    <property type="resolution" value="3.30 A"/>
    <property type="chains" value="X=1-380"/>
</dbReference>
<dbReference type="PDBsum" id="1X5P"/>
<dbReference type="PDBsum" id="2BZ2"/>
<dbReference type="PDBsum" id="2JX2"/>
<dbReference type="PDBsum" id="5OOB"/>
<dbReference type="PDBsum" id="6GML"/>
<dbReference type="PDBsum" id="7YCX"/>
<dbReference type="PDBsum" id="8JJ6"/>
<dbReference type="PDBsum" id="8UHA"/>
<dbReference type="PDBsum" id="8UHD"/>
<dbReference type="PDBsum" id="8UHG"/>
<dbReference type="PDBsum" id="8UI0"/>
<dbReference type="PDBsum" id="8W8E"/>
<dbReference type="PDBsum" id="9J0N"/>
<dbReference type="PDBsum" id="9J0O"/>
<dbReference type="PDBsum" id="9J0P"/>
<dbReference type="BMRB" id="P18615"/>
<dbReference type="EMDB" id="EMD-0038"/>
<dbReference type="EMDB" id="EMD-33741"/>
<dbReference type="EMDB" id="EMD-37352"/>
<dbReference type="EMDB" id="EMD-42267"/>
<dbReference type="EMDB" id="EMD-42270"/>
<dbReference type="EMDB" id="EMD-42280"/>
<dbReference type="EMDB" id="EMD-42285"/>
<dbReference type="EMDB" id="EMD-42304"/>
<dbReference type="EMDB" id="EMD-61058"/>
<dbReference type="EMDB" id="EMD-61059"/>
<dbReference type="EMDB" id="EMD-61060"/>
<dbReference type="SMR" id="P18615"/>
<dbReference type="BioGRID" id="113662">
    <property type="interactions" value="204"/>
</dbReference>
<dbReference type="ComplexPortal" id="CPX-6267">
    <property type="entry name" value="NELF negative elongation factor complex"/>
</dbReference>
<dbReference type="CORUM" id="P18615"/>
<dbReference type="DIP" id="DIP-32669N"/>
<dbReference type="FunCoup" id="P18615">
    <property type="interactions" value="3414"/>
</dbReference>
<dbReference type="IntAct" id="P18615">
    <property type="interactions" value="60"/>
</dbReference>
<dbReference type="MINT" id="P18615"/>
<dbReference type="STRING" id="9606.ENSP00000364578"/>
<dbReference type="GlyGen" id="P18615">
    <property type="glycosylation" value="1 site, 1 O-linked glycan (1 site)"/>
</dbReference>
<dbReference type="iPTMnet" id="P18615"/>
<dbReference type="MetOSite" id="P18615"/>
<dbReference type="PhosphoSitePlus" id="P18615"/>
<dbReference type="BioMuta" id="NELFE"/>
<dbReference type="DMDM" id="1350554"/>
<dbReference type="CPTAC" id="CPTAC-999"/>
<dbReference type="jPOST" id="P18615"/>
<dbReference type="MassIVE" id="P18615"/>
<dbReference type="PaxDb" id="9606-ENSP00000364578"/>
<dbReference type="PeptideAtlas" id="P18615"/>
<dbReference type="ProteomicsDB" id="5199"/>
<dbReference type="ProteomicsDB" id="53602">
    <molecule id="P18615-1"/>
</dbReference>
<dbReference type="ProteomicsDB" id="5554"/>
<dbReference type="Pumba" id="P18615"/>
<dbReference type="Antibodypedia" id="1924">
    <property type="antibodies" value="155 antibodies from 28 providers"/>
</dbReference>
<dbReference type="DNASU" id="7936"/>
<dbReference type="Ensembl" id="ENST00000375425.9">
    <molecule id="P18615-3"/>
    <property type="protein sequence ID" value="ENSP00000364574.5"/>
    <property type="gene ID" value="ENSG00000204356.14"/>
</dbReference>
<dbReference type="Ensembl" id="ENST00000375429.8">
    <molecule id="P18615-1"/>
    <property type="protein sequence ID" value="ENSP00000364578.3"/>
    <property type="gene ID" value="ENSG00000204356.14"/>
</dbReference>
<dbReference type="Ensembl" id="ENST00000383174.8">
    <molecule id="P18615-1"/>
    <property type="protein sequence ID" value="ENSP00000372660.4"/>
    <property type="gene ID" value="ENSG00000206268.11"/>
</dbReference>
<dbReference type="Ensembl" id="ENST00000383343.8">
    <molecule id="P18615-1"/>
    <property type="protein sequence ID" value="ENSP00000372834.4"/>
    <property type="gene ID" value="ENSG00000206357.11"/>
</dbReference>
<dbReference type="Ensembl" id="ENST00000429857.6">
    <molecule id="P18615-1"/>
    <property type="protein sequence ID" value="ENSP00000403623.2"/>
    <property type="gene ID" value="ENSG00000231044.10"/>
</dbReference>
<dbReference type="Ensembl" id="ENST00000444811.6">
    <molecule id="P18615-4"/>
    <property type="protein sequence ID" value="ENSP00000388400.2"/>
    <property type="gene ID" value="ENSG00000204356.14"/>
</dbReference>
<dbReference type="Ensembl" id="ENST00000448628.6">
    <molecule id="P18615-1"/>
    <property type="protein sequence ID" value="ENSP00000394879.2"/>
    <property type="gene ID" value="ENSG00000229363.9"/>
</dbReference>
<dbReference type="Ensembl" id="ENST00000457397.6">
    <molecule id="P18615-1"/>
    <property type="protein sequence ID" value="ENSP00000393005.2"/>
    <property type="gene ID" value="ENSG00000233801.9"/>
</dbReference>
<dbReference type="GeneID" id="7936"/>
<dbReference type="KEGG" id="hsa:7936"/>
<dbReference type="MANE-Select" id="ENST00000375429.8">
    <property type="protein sequence ID" value="ENSP00000364578.3"/>
    <property type="RefSeq nucleotide sequence ID" value="NM_002904.6"/>
    <property type="RefSeq protein sequence ID" value="NP_002895.3"/>
</dbReference>
<dbReference type="UCSC" id="uc003nyk.4">
    <molecule id="P18615-1"/>
    <property type="organism name" value="human"/>
</dbReference>
<dbReference type="AGR" id="HGNC:13974"/>
<dbReference type="CTD" id="7936"/>
<dbReference type="DisGeNET" id="7936"/>
<dbReference type="GeneCards" id="NELFE"/>
<dbReference type="HGNC" id="HGNC:13974">
    <property type="gene designation" value="NELFE"/>
</dbReference>
<dbReference type="HPA" id="ENSG00000204356">
    <property type="expression patterns" value="Low tissue specificity"/>
</dbReference>
<dbReference type="MIM" id="154040">
    <property type="type" value="gene"/>
</dbReference>
<dbReference type="neXtProt" id="NX_P18615"/>
<dbReference type="OpenTargets" id="ENSG00000204356"/>
<dbReference type="PharmGKB" id="PA134974984"/>
<dbReference type="VEuPathDB" id="HostDB:ENSG00000204356"/>
<dbReference type="eggNOG" id="ENOG502QQQ4">
    <property type="taxonomic scope" value="Eukaryota"/>
</dbReference>
<dbReference type="GeneTree" id="ENSGT00630000089917"/>
<dbReference type="HOGENOM" id="CLU_055643_0_0_1"/>
<dbReference type="InParanoid" id="P18615"/>
<dbReference type="OrthoDB" id="378874at2759"/>
<dbReference type="PAN-GO" id="P18615">
    <property type="GO annotations" value="2 GO annotations based on evolutionary models"/>
</dbReference>
<dbReference type="PhylomeDB" id="P18615"/>
<dbReference type="TreeFam" id="TF324087"/>
<dbReference type="PathwayCommons" id="P18615"/>
<dbReference type="Reactome" id="R-HSA-112382">
    <property type="pathway name" value="Formation of RNA Pol II elongation complex"/>
</dbReference>
<dbReference type="Reactome" id="R-HSA-113418">
    <property type="pathway name" value="Formation of the Early Elongation Complex"/>
</dbReference>
<dbReference type="Reactome" id="R-HSA-167152">
    <property type="pathway name" value="Formation of HIV elongation complex in the absence of HIV Tat"/>
</dbReference>
<dbReference type="Reactome" id="R-HSA-167158">
    <property type="pathway name" value="Formation of the HIV-1 Early Elongation Complex"/>
</dbReference>
<dbReference type="Reactome" id="R-HSA-167200">
    <property type="pathway name" value="Formation of HIV-1 elongation complex containing HIV-1 Tat"/>
</dbReference>
<dbReference type="Reactome" id="R-HSA-167238">
    <property type="pathway name" value="Pausing and recovery of Tat-mediated HIV elongation"/>
</dbReference>
<dbReference type="Reactome" id="R-HSA-167242">
    <property type="pathway name" value="Abortive elongation of HIV-1 transcript in the absence of Tat"/>
</dbReference>
<dbReference type="Reactome" id="R-HSA-167243">
    <property type="pathway name" value="Tat-mediated HIV elongation arrest and recovery"/>
</dbReference>
<dbReference type="Reactome" id="R-HSA-167246">
    <property type="pathway name" value="Tat-mediated elongation of the HIV-1 transcript"/>
</dbReference>
<dbReference type="Reactome" id="R-HSA-167287">
    <property type="pathway name" value="HIV elongation arrest and recovery"/>
</dbReference>
<dbReference type="Reactome" id="R-HSA-167290">
    <property type="pathway name" value="Pausing and recovery of HIV elongation"/>
</dbReference>
<dbReference type="Reactome" id="R-HSA-674695">
    <property type="pathway name" value="RNA Polymerase II Pre-transcription Events"/>
</dbReference>
<dbReference type="Reactome" id="R-HSA-6796648">
    <property type="pathway name" value="TP53 Regulates Transcription of DNA Repair Genes"/>
</dbReference>
<dbReference type="Reactome" id="R-HSA-75955">
    <property type="pathway name" value="RNA Polymerase II Transcription Elongation"/>
</dbReference>
<dbReference type="SignaLink" id="P18615"/>
<dbReference type="SIGNOR" id="P18615"/>
<dbReference type="BioGRID-ORCS" id="7936">
    <property type="hits" value="388 hits in 1160 CRISPR screens"/>
</dbReference>
<dbReference type="CD-CODE" id="81D2A7B6">
    <property type="entry name" value="Nuclear stress body"/>
</dbReference>
<dbReference type="CD-CODE" id="DEE660B4">
    <property type="entry name" value="Stress granule"/>
</dbReference>
<dbReference type="EvolutionaryTrace" id="P18615"/>
<dbReference type="GeneWiki" id="RDBP"/>
<dbReference type="GenomeRNAi" id="7936"/>
<dbReference type="Pharos" id="P18615">
    <property type="development level" value="Tbio"/>
</dbReference>
<dbReference type="PRO" id="PR:P18615"/>
<dbReference type="Proteomes" id="UP000005640">
    <property type="component" value="Chromosome 6"/>
</dbReference>
<dbReference type="RNAct" id="P18615">
    <property type="molecule type" value="protein"/>
</dbReference>
<dbReference type="Bgee" id="ENSG00000204356">
    <property type="expression patterns" value="Expressed in left testis and 97 other cell types or tissues"/>
</dbReference>
<dbReference type="ExpressionAtlas" id="P18615">
    <property type="expression patterns" value="baseline and differential"/>
</dbReference>
<dbReference type="GO" id="GO:0000785">
    <property type="term" value="C:chromatin"/>
    <property type="evidence" value="ECO:0000314"/>
    <property type="project" value="UniProt"/>
</dbReference>
<dbReference type="GO" id="GO:0032021">
    <property type="term" value="C:NELF complex"/>
    <property type="evidence" value="ECO:0000314"/>
    <property type="project" value="UniProtKB"/>
</dbReference>
<dbReference type="GO" id="GO:0016604">
    <property type="term" value="C:nuclear body"/>
    <property type="evidence" value="ECO:0000314"/>
    <property type="project" value="HPA"/>
</dbReference>
<dbReference type="GO" id="GO:0005654">
    <property type="term" value="C:nucleoplasm"/>
    <property type="evidence" value="ECO:0000314"/>
    <property type="project" value="HPA"/>
</dbReference>
<dbReference type="GO" id="GO:0005634">
    <property type="term" value="C:nucleus"/>
    <property type="evidence" value="ECO:0000314"/>
    <property type="project" value="ComplexPortal"/>
</dbReference>
<dbReference type="GO" id="GO:0005886">
    <property type="term" value="C:plasma membrane"/>
    <property type="evidence" value="ECO:0000314"/>
    <property type="project" value="HPA"/>
</dbReference>
<dbReference type="GO" id="GO:0003682">
    <property type="term" value="F:chromatin binding"/>
    <property type="evidence" value="ECO:0000314"/>
    <property type="project" value="UniProt"/>
</dbReference>
<dbReference type="GO" id="GO:0003729">
    <property type="term" value="F:mRNA binding"/>
    <property type="evidence" value="ECO:0000314"/>
    <property type="project" value="UniProt"/>
</dbReference>
<dbReference type="GO" id="GO:0003723">
    <property type="term" value="F:RNA binding"/>
    <property type="evidence" value="ECO:0000314"/>
    <property type="project" value="UniProtKB"/>
</dbReference>
<dbReference type="GO" id="GO:0000122">
    <property type="term" value="P:negative regulation of transcription by RNA polymerase II"/>
    <property type="evidence" value="ECO:0007669"/>
    <property type="project" value="Ensembl"/>
</dbReference>
<dbReference type="GO" id="GO:0034244">
    <property type="term" value="P:negative regulation of transcription elongation by RNA polymerase II"/>
    <property type="evidence" value="ECO:0000314"/>
    <property type="project" value="UniProtKB"/>
</dbReference>
<dbReference type="GO" id="GO:0070374">
    <property type="term" value="P:positive regulation of ERK1 and ERK2 cascade"/>
    <property type="evidence" value="ECO:0007669"/>
    <property type="project" value="Ensembl"/>
</dbReference>
<dbReference type="GO" id="GO:0045944">
    <property type="term" value="P:positive regulation of transcription by RNA polymerase II"/>
    <property type="evidence" value="ECO:0007669"/>
    <property type="project" value="Ensembl"/>
</dbReference>
<dbReference type="CDD" id="cd12305">
    <property type="entry name" value="RRM_NELFE"/>
    <property type="match status" value="1"/>
</dbReference>
<dbReference type="DisProt" id="DP02713"/>
<dbReference type="FunFam" id="3.30.70.330:FF:001826">
    <property type="match status" value="1"/>
</dbReference>
<dbReference type="Gene3D" id="3.30.70.330">
    <property type="match status" value="1"/>
</dbReference>
<dbReference type="IDEAL" id="IID00030"/>
<dbReference type="InterPro" id="IPR033102">
    <property type="entry name" value="NELFE"/>
</dbReference>
<dbReference type="InterPro" id="IPR034637">
    <property type="entry name" value="NELFE_RRM"/>
</dbReference>
<dbReference type="InterPro" id="IPR012677">
    <property type="entry name" value="Nucleotide-bd_a/b_plait_sf"/>
</dbReference>
<dbReference type="InterPro" id="IPR035979">
    <property type="entry name" value="RBD_domain_sf"/>
</dbReference>
<dbReference type="InterPro" id="IPR000504">
    <property type="entry name" value="RRM_dom"/>
</dbReference>
<dbReference type="PANTHER" id="PTHR17250">
    <property type="entry name" value="NEGATIVE ELONGATION FACTOR E"/>
    <property type="match status" value="1"/>
</dbReference>
<dbReference type="PANTHER" id="PTHR17250:SF0">
    <property type="entry name" value="NEGATIVE ELONGATION FACTOR E"/>
    <property type="match status" value="1"/>
</dbReference>
<dbReference type="Pfam" id="PF00076">
    <property type="entry name" value="RRM_1"/>
    <property type="match status" value="1"/>
</dbReference>
<dbReference type="SMART" id="SM00360">
    <property type="entry name" value="RRM"/>
    <property type="match status" value="1"/>
</dbReference>
<dbReference type="SUPFAM" id="SSF54928">
    <property type="entry name" value="RNA-binding domain, RBD"/>
    <property type="match status" value="1"/>
</dbReference>
<dbReference type="PROSITE" id="PS50102">
    <property type="entry name" value="RRM"/>
    <property type="match status" value="1"/>
</dbReference>
<sequence length="380" mass="43240">MLVIPPGLSEEEEALQKKFNKLKKKKKALLALKKQSSSSTTSQGGVKRSLSEQPVMDTATATEQAKQLVKSGAISAIKAETKNSGFKRSRTLEGKLKDPEKGPVPTFQPFQRSISADDDLQESSRRPQRKSLYESFVSSSDRLRELGPDGEEAEGPGAGDGPPRSFDWGYEERSGAHSSASPPRSRSRDRSHERNRDRDRDRERDRDRDRDRDRERDRDRDRDRDRDRERDRDRERDRDRDREGPFRRSDSFPERRAPRKGNTLYVYGEDMTPTLLRGAFSPFGNIIDLSMDPPRNCAFVTYEKMESADQAVAELNGTQVESVQLKVNIARKQPMLDAATGKSVWGSLAVQNSPKGCHRDKRTQIVYSDDVYKENLVDGF</sequence>
<accession>P18615</accession>
<accession>A2BE08</accession>
<accession>B4DUN1</accession>
<accession>B4DYX9</accession>
<accession>Q5JP74</accession>
<accession>Q5JP75</accession>
<accession>Q96F56</accession>
<accession>Q9NPK2</accession>
<name>NELFE_HUMAN</name>
<keyword id="KW-0002">3D-structure</keyword>
<keyword id="KW-0013">ADP-ribosylation</keyword>
<keyword id="KW-0025">Alternative splicing</keyword>
<keyword id="KW-0158">Chromosome</keyword>
<keyword id="KW-0175">Coiled coil</keyword>
<keyword id="KW-0903">Direct protein sequencing</keyword>
<keyword id="KW-1017">Isopeptide bond</keyword>
<keyword id="KW-0539">Nucleus</keyword>
<keyword id="KW-0597">Phosphoprotein</keyword>
<keyword id="KW-1267">Proteomics identification</keyword>
<keyword id="KW-1185">Reference proteome</keyword>
<keyword id="KW-0677">Repeat</keyword>
<keyword id="KW-0678">Repressor</keyword>
<keyword id="KW-0694">RNA-binding</keyword>
<keyword id="KW-0804">Transcription</keyword>
<keyword id="KW-0805">Transcription regulation</keyword>
<keyword id="KW-0832">Ubl conjugation</keyword>